<organism>
    <name type="scientific">Mesoplasma florum (strain ATCC 33453 / NBRC 100688 / NCTC 11704 / L1)</name>
    <name type="common">Acholeplasma florum</name>
    <dbReference type="NCBI Taxonomy" id="265311"/>
    <lineage>
        <taxon>Bacteria</taxon>
        <taxon>Bacillati</taxon>
        <taxon>Mycoplasmatota</taxon>
        <taxon>Mollicutes</taxon>
        <taxon>Entomoplasmatales</taxon>
        <taxon>Entomoplasmataceae</taxon>
        <taxon>Mesoplasma</taxon>
    </lineage>
</organism>
<evidence type="ECO:0000255" key="1">
    <source>
        <dbReference type="HAMAP-Rule" id="MF_01454"/>
    </source>
</evidence>
<evidence type="ECO:0000255" key="2">
    <source>
        <dbReference type="PROSITE-ProRule" id="PRU01229"/>
    </source>
</evidence>
<evidence type="ECO:0000255" key="3">
    <source>
        <dbReference type="PROSITE-ProRule" id="PRU01231"/>
    </source>
</evidence>
<accession>Q6F0U3</accession>
<sequence length="432" mass="47699">MKFIDTAKFTIKAGNGGNGAVSFHTALFVPNGGPNGGDGGNGGSVIFEADGGKHSLLDLKLQKQLSAQDGFKGDIKNMHGAQGKDLIVRVPVGTLIIENKTGTILADMDEDKKQVLVAKGGKGGKGNARFANSRNKAPTIFEAGEIGQFYEVKAELKVLADVGFVGLPNAGKSTLLRAISNSKPEVADYAFTTLNPQLGVSRAKDGSTFVVADLPGLIEGASLGKGLGHQFLKHIERCRVICHVLDMSGNYGQEDVIKNYELIRSELVKYNYKLDERPEIIVANKMDTDEAQLNMMEEDIKKYFKDKKVVFVSGLLKDNVDELLLKIAKELETAKYVPLWEMEQDIYEGIKVYRLEEDEEDIQIINKGNGRWEVAGDTIYKIYQKFPITTDDNLLLFNEKLKKSGVYDMLRERGVGAGDIVKVFEYELEWMD</sequence>
<protein>
    <recommendedName>
        <fullName evidence="1">GTPase Obg</fullName>
        <ecNumber evidence="1">3.6.5.-</ecNumber>
    </recommendedName>
    <alternativeName>
        <fullName evidence="1">GTP-binding protein Obg</fullName>
    </alternativeName>
</protein>
<reference key="1">
    <citation type="submission" date="2004-06" db="EMBL/GenBank/DDBJ databases">
        <authorList>
            <person name="Birren B.W."/>
            <person name="Stange-Thomann N."/>
            <person name="Hafez N."/>
            <person name="DeCaprio D."/>
            <person name="Fisher S."/>
            <person name="Butler J."/>
            <person name="Elkins T."/>
            <person name="Kodira C.D."/>
            <person name="Major J."/>
            <person name="Wang S."/>
            <person name="Nicol R."/>
            <person name="Nusbaum C."/>
        </authorList>
    </citation>
    <scope>NUCLEOTIDE SEQUENCE [LARGE SCALE GENOMIC DNA]</scope>
    <source>
        <strain>ATCC 33453 / NBRC 100688 / NCTC 11704 / L1</strain>
    </source>
</reference>
<name>OBG_MESFL</name>
<gene>
    <name evidence="1" type="primary">obg</name>
    <name type="ordered locus">Mfl522</name>
</gene>
<proteinExistence type="inferred from homology"/>
<keyword id="KW-0963">Cytoplasm</keyword>
<keyword id="KW-0342">GTP-binding</keyword>
<keyword id="KW-0378">Hydrolase</keyword>
<keyword id="KW-0460">Magnesium</keyword>
<keyword id="KW-0479">Metal-binding</keyword>
<keyword id="KW-0547">Nucleotide-binding</keyword>
<keyword id="KW-1185">Reference proteome</keyword>
<feature type="chain" id="PRO_0000386034" description="GTPase Obg">
    <location>
        <begin position="1"/>
        <end position="432"/>
    </location>
</feature>
<feature type="domain" description="Obg" evidence="3">
    <location>
        <begin position="1"/>
        <end position="159"/>
    </location>
</feature>
<feature type="domain" description="OBG-type G" evidence="1">
    <location>
        <begin position="160"/>
        <end position="332"/>
    </location>
</feature>
<feature type="domain" description="OCT" evidence="2">
    <location>
        <begin position="354"/>
        <end position="432"/>
    </location>
</feature>
<feature type="binding site" evidence="1">
    <location>
        <begin position="166"/>
        <end position="173"/>
    </location>
    <ligand>
        <name>GTP</name>
        <dbReference type="ChEBI" id="CHEBI:37565"/>
    </ligand>
</feature>
<feature type="binding site" evidence="1">
    <location>
        <position position="173"/>
    </location>
    <ligand>
        <name>Mg(2+)</name>
        <dbReference type="ChEBI" id="CHEBI:18420"/>
    </ligand>
</feature>
<feature type="binding site" evidence="1">
    <location>
        <begin position="191"/>
        <end position="195"/>
    </location>
    <ligand>
        <name>GTP</name>
        <dbReference type="ChEBI" id="CHEBI:37565"/>
    </ligand>
</feature>
<feature type="binding site" evidence="1">
    <location>
        <position position="193"/>
    </location>
    <ligand>
        <name>Mg(2+)</name>
        <dbReference type="ChEBI" id="CHEBI:18420"/>
    </ligand>
</feature>
<feature type="binding site" evidence="1">
    <location>
        <begin position="213"/>
        <end position="216"/>
    </location>
    <ligand>
        <name>GTP</name>
        <dbReference type="ChEBI" id="CHEBI:37565"/>
    </ligand>
</feature>
<feature type="binding site" evidence="1">
    <location>
        <begin position="284"/>
        <end position="287"/>
    </location>
    <ligand>
        <name>GTP</name>
        <dbReference type="ChEBI" id="CHEBI:37565"/>
    </ligand>
</feature>
<feature type="binding site" evidence="1">
    <location>
        <begin position="313"/>
        <end position="315"/>
    </location>
    <ligand>
        <name>GTP</name>
        <dbReference type="ChEBI" id="CHEBI:37565"/>
    </ligand>
</feature>
<comment type="function">
    <text evidence="1">An essential GTPase which binds GTP, GDP and possibly (p)ppGpp with moderate affinity, with high nucleotide exchange rates and a fairly low GTP hydrolysis rate. Plays a role in control of the cell cycle, stress response, ribosome biogenesis and in those bacteria that undergo differentiation, in morphogenesis control.</text>
</comment>
<comment type="cofactor">
    <cofactor evidence="1">
        <name>Mg(2+)</name>
        <dbReference type="ChEBI" id="CHEBI:18420"/>
    </cofactor>
</comment>
<comment type="subunit">
    <text evidence="1">Monomer.</text>
</comment>
<comment type="subcellular location">
    <subcellularLocation>
        <location evidence="1">Cytoplasm</location>
    </subcellularLocation>
</comment>
<comment type="similarity">
    <text evidence="1">Belongs to the TRAFAC class OBG-HflX-like GTPase superfamily. OBG GTPase family.</text>
</comment>
<dbReference type="EC" id="3.6.5.-" evidence="1"/>
<dbReference type="EMBL" id="AE017263">
    <property type="protein sequence ID" value="AAT75880.1"/>
    <property type="molecule type" value="Genomic_DNA"/>
</dbReference>
<dbReference type="RefSeq" id="WP_011183420.1">
    <property type="nucleotide sequence ID" value="NC_006055.1"/>
</dbReference>
<dbReference type="RefSeq" id="YP_053764.1">
    <property type="nucleotide sequence ID" value="NC_006055.1"/>
</dbReference>
<dbReference type="SMR" id="Q6F0U3"/>
<dbReference type="STRING" id="265311.Mfl522"/>
<dbReference type="PaxDb" id="265311-Mfl522"/>
<dbReference type="EnsemblBacteria" id="AAT75880">
    <property type="protein sequence ID" value="AAT75880"/>
    <property type="gene ID" value="Mfl522"/>
</dbReference>
<dbReference type="GeneID" id="2897989"/>
<dbReference type="KEGG" id="mfl:Mfl522"/>
<dbReference type="PATRIC" id="fig|265311.5.peg.526"/>
<dbReference type="eggNOG" id="COG0536">
    <property type="taxonomic scope" value="Bacteria"/>
</dbReference>
<dbReference type="HOGENOM" id="CLU_011747_2_0_14"/>
<dbReference type="OrthoDB" id="9807318at2"/>
<dbReference type="Proteomes" id="UP000006647">
    <property type="component" value="Chromosome"/>
</dbReference>
<dbReference type="GO" id="GO:0005737">
    <property type="term" value="C:cytoplasm"/>
    <property type="evidence" value="ECO:0007669"/>
    <property type="project" value="UniProtKB-SubCell"/>
</dbReference>
<dbReference type="GO" id="GO:0005525">
    <property type="term" value="F:GTP binding"/>
    <property type="evidence" value="ECO:0007669"/>
    <property type="project" value="UniProtKB-UniRule"/>
</dbReference>
<dbReference type="GO" id="GO:0003924">
    <property type="term" value="F:GTPase activity"/>
    <property type="evidence" value="ECO:0007669"/>
    <property type="project" value="UniProtKB-UniRule"/>
</dbReference>
<dbReference type="GO" id="GO:0000287">
    <property type="term" value="F:magnesium ion binding"/>
    <property type="evidence" value="ECO:0007669"/>
    <property type="project" value="InterPro"/>
</dbReference>
<dbReference type="GO" id="GO:0042254">
    <property type="term" value="P:ribosome biogenesis"/>
    <property type="evidence" value="ECO:0007669"/>
    <property type="project" value="UniProtKB-UniRule"/>
</dbReference>
<dbReference type="CDD" id="cd01898">
    <property type="entry name" value="Obg"/>
    <property type="match status" value="1"/>
</dbReference>
<dbReference type="FunFam" id="2.70.210.12:FF:000001">
    <property type="entry name" value="GTPase Obg"/>
    <property type="match status" value="1"/>
</dbReference>
<dbReference type="Gene3D" id="3.30.300.350">
    <property type="entry name" value="GTP-binding protein OBG, C-terminal domain"/>
    <property type="match status" value="1"/>
</dbReference>
<dbReference type="Gene3D" id="2.70.210.12">
    <property type="entry name" value="GTP1/OBG domain"/>
    <property type="match status" value="1"/>
</dbReference>
<dbReference type="Gene3D" id="3.40.50.300">
    <property type="entry name" value="P-loop containing nucleotide triphosphate hydrolases"/>
    <property type="match status" value="1"/>
</dbReference>
<dbReference type="HAMAP" id="MF_01454">
    <property type="entry name" value="GTPase_Obg"/>
    <property type="match status" value="1"/>
</dbReference>
<dbReference type="InterPro" id="IPR031167">
    <property type="entry name" value="G_OBG"/>
</dbReference>
<dbReference type="InterPro" id="IPR006073">
    <property type="entry name" value="GTP-bd"/>
</dbReference>
<dbReference type="InterPro" id="IPR014100">
    <property type="entry name" value="GTP-bd_Obg/CgtA"/>
</dbReference>
<dbReference type="InterPro" id="IPR036346">
    <property type="entry name" value="GTP-bd_prot_GTP1/OBG_C_sf"/>
</dbReference>
<dbReference type="InterPro" id="IPR006074">
    <property type="entry name" value="GTP1-OBG_CS"/>
</dbReference>
<dbReference type="InterPro" id="IPR006169">
    <property type="entry name" value="GTP1_OBG_dom"/>
</dbReference>
<dbReference type="InterPro" id="IPR036726">
    <property type="entry name" value="GTP1_OBG_dom_sf"/>
</dbReference>
<dbReference type="InterPro" id="IPR045086">
    <property type="entry name" value="OBG_GTPase"/>
</dbReference>
<dbReference type="InterPro" id="IPR015349">
    <property type="entry name" value="OCT_dom"/>
</dbReference>
<dbReference type="InterPro" id="IPR027417">
    <property type="entry name" value="P-loop_NTPase"/>
</dbReference>
<dbReference type="InterPro" id="IPR005225">
    <property type="entry name" value="Small_GTP-bd"/>
</dbReference>
<dbReference type="NCBIfam" id="TIGR02729">
    <property type="entry name" value="Obg_CgtA"/>
    <property type="match status" value="1"/>
</dbReference>
<dbReference type="NCBIfam" id="TIGR03595">
    <property type="entry name" value="Obg_CgtA_exten"/>
    <property type="match status" value="1"/>
</dbReference>
<dbReference type="NCBIfam" id="NF008955">
    <property type="entry name" value="PRK12297.1"/>
    <property type="match status" value="1"/>
</dbReference>
<dbReference type="NCBIfam" id="NF008956">
    <property type="entry name" value="PRK12299.1"/>
    <property type="match status" value="1"/>
</dbReference>
<dbReference type="NCBIfam" id="TIGR00231">
    <property type="entry name" value="small_GTP"/>
    <property type="match status" value="1"/>
</dbReference>
<dbReference type="PANTHER" id="PTHR11702">
    <property type="entry name" value="DEVELOPMENTALLY REGULATED GTP-BINDING PROTEIN-RELATED"/>
    <property type="match status" value="1"/>
</dbReference>
<dbReference type="PANTHER" id="PTHR11702:SF31">
    <property type="entry name" value="MITOCHONDRIAL RIBOSOME-ASSOCIATED GTPASE 2"/>
    <property type="match status" value="1"/>
</dbReference>
<dbReference type="Pfam" id="PF09269">
    <property type="entry name" value="DUF1967"/>
    <property type="match status" value="1"/>
</dbReference>
<dbReference type="Pfam" id="PF01018">
    <property type="entry name" value="GTP1_OBG"/>
    <property type="match status" value="1"/>
</dbReference>
<dbReference type="Pfam" id="PF01926">
    <property type="entry name" value="MMR_HSR1"/>
    <property type="match status" value="1"/>
</dbReference>
<dbReference type="PIRSF" id="PIRSF002401">
    <property type="entry name" value="GTP_bd_Obg/CgtA"/>
    <property type="match status" value="1"/>
</dbReference>
<dbReference type="PRINTS" id="PR00326">
    <property type="entry name" value="GTP1OBG"/>
</dbReference>
<dbReference type="SUPFAM" id="SSF102741">
    <property type="entry name" value="Obg GTP-binding protein C-terminal domain"/>
    <property type="match status" value="1"/>
</dbReference>
<dbReference type="SUPFAM" id="SSF82051">
    <property type="entry name" value="Obg GTP-binding protein N-terminal domain"/>
    <property type="match status" value="1"/>
</dbReference>
<dbReference type="SUPFAM" id="SSF52540">
    <property type="entry name" value="P-loop containing nucleoside triphosphate hydrolases"/>
    <property type="match status" value="1"/>
</dbReference>
<dbReference type="PROSITE" id="PS51710">
    <property type="entry name" value="G_OBG"/>
    <property type="match status" value="1"/>
</dbReference>
<dbReference type="PROSITE" id="PS00905">
    <property type="entry name" value="GTP1_OBG"/>
    <property type="match status" value="1"/>
</dbReference>
<dbReference type="PROSITE" id="PS51883">
    <property type="entry name" value="OBG"/>
    <property type="match status" value="1"/>
</dbReference>
<dbReference type="PROSITE" id="PS51881">
    <property type="entry name" value="OCT"/>
    <property type="match status" value="1"/>
</dbReference>